<evidence type="ECO:0000256" key="1">
    <source>
        <dbReference type="SAM" id="MobiDB-lite"/>
    </source>
</evidence>
<evidence type="ECO:0000269" key="2">
    <source>
    </source>
</evidence>
<evidence type="ECO:0000269" key="3">
    <source>
    </source>
</evidence>
<evidence type="ECO:0000303" key="4">
    <source>
    </source>
</evidence>
<evidence type="ECO:0000305" key="5"/>
<evidence type="ECO:0000312" key="6">
    <source>
        <dbReference type="MGI" id="MGI:3779933"/>
    </source>
</evidence>
<feature type="chain" id="PRO_0000416061" description="Protein TOPAZ1">
    <location>
        <begin position="1"/>
        <end position="1653"/>
    </location>
</feature>
<feature type="region of interest" description="Disordered" evidence="1">
    <location>
        <begin position="1"/>
        <end position="94"/>
    </location>
</feature>
<feature type="region of interest" description="Disordered" evidence="1">
    <location>
        <begin position="284"/>
        <end position="303"/>
    </location>
</feature>
<feature type="region of interest" description="Disordered" evidence="1">
    <location>
        <begin position="415"/>
        <end position="442"/>
    </location>
</feature>
<feature type="compositionally biased region" description="Basic and acidic residues" evidence="1">
    <location>
        <begin position="63"/>
        <end position="78"/>
    </location>
</feature>
<feature type="compositionally biased region" description="Basic and acidic residues" evidence="1">
    <location>
        <begin position="423"/>
        <end position="442"/>
    </location>
</feature>
<accession>E5FYH1</accession>
<organism>
    <name type="scientific">Mus musculus</name>
    <name type="common">Mouse</name>
    <dbReference type="NCBI Taxonomy" id="10090"/>
    <lineage>
        <taxon>Eukaryota</taxon>
        <taxon>Metazoa</taxon>
        <taxon>Chordata</taxon>
        <taxon>Craniata</taxon>
        <taxon>Vertebrata</taxon>
        <taxon>Euteleostomi</taxon>
        <taxon>Mammalia</taxon>
        <taxon>Eutheria</taxon>
        <taxon>Euarchontoglires</taxon>
        <taxon>Glires</taxon>
        <taxon>Rodentia</taxon>
        <taxon>Myomorpha</taxon>
        <taxon>Muroidea</taxon>
        <taxon>Muridae</taxon>
        <taxon>Murinae</taxon>
        <taxon>Mus</taxon>
        <taxon>Mus</taxon>
    </lineage>
</organism>
<dbReference type="EMBL" id="HM631980">
    <property type="protein sequence ID" value="ADK36691.1"/>
    <property type="molecule type" value="mRNA"/>
</dbReference>
<dbReference type="EMBL" id="AC124778">
    <property type="status" value="NOT_ANNOTATED_CDS"/>
    <property type="molecule type" value="Genomic_DNA"/>
</dbReference>
<dbReference type="EMBL" id="AC125374">
    <property type="status" value="NOT_ANNOTATED_CDS"/>
    <property type="molecule type" value="Genomic_DNA"/>
</dbReference>
<dbReference type="CCDS" id="CCDS57718.1"/>
<dbReference type="RefSeq" id="NP_001186665.1">
    <property type="nucleotide sequence ID" value="NM_001199736.2"/>
</dbReference>
<dbReference type="BioGRID" id="582959">
    <property type="interactions" value="7"/>
</dbReference>
<dbReference type="FunCoup" id="E5FYH1">
    <property type="interactions" value="19"/>
</dbReference>
<dbReference type="STRING" id="10090.ENSMUSP00000136304"/>
<dbReference type="GlyGen" id="E5FYH1">
    <property type="glycosylation" value="2 sites, 1 O-linked glycan (1 site)"/>
</dbReference>
<dbReference type="iPTMnet" id="E5FYH1"/>
<dbReference type="PhosphoSitePlus" id="E5FYH1"/>
<dbReference type="PaxDb" id="10090-ENSMUSP00000136304"/>
<dbReference type="ProteomicsDB" id="258815"/>
<dbReference type="Antibodypedia" id="64655">
    <property type="antibodies" value="22 antibodies from 14 providers"/>
</dbReference>
<dbReference type="Ensembl" id="ENSMUST00000178679.3">
    <property type="protein sequence ID" value="ENSMUSP00000136304.2"/>
    <property type="gene ID" value="ENSMUSG00000094985.3"/>
</dbReference>
<dbReference type="GeneID" id="671232"/>
<dbReference type="KEGG" id="mmu:671232"/>
<dbReference type="UCSC" id="uc012hcy.1">
    <property type="organism name" value="mouse"/>
</dbReference>
<dbReference type="AGR" id="MGI:3779933"/>
<dbReference type="CTD" id="375337"/>
<dbReference type="MGI" id="MGI:3779933">
    <property type="gene designation" value="Topaz1"/>
</dbReference>
<dbReference type="VEuPathDB" id="HostDB:ENSMUSG00000094985"/>
<dbReference type="eggNOG" id="ENOG502QPIV">
    <property type="taxonomic scope" value="Eukaryota"/>
</dbReference>
<dbReference type="GeneTree" id="ENSGT00390000012495"/>
<dbReference type="HOGENOM" id="CLU_003190_0_0_1"/>
<dbReference type="InParanoid" id="E5FYH1"/>
<dbReference type="OMA" id="SPNEYHI"/>
<dbReference type="OrthoDB" id="8859650at2759"/>
<dbReference type="TreeFam" id="TF338635"/>
<dbReference type="BioGRID-ORCS" id="671232">
    <property type="hits" value="2 hits in 79 CRISPR screens"/>
</dbReference>
<dbReference type="ChiTaRS" id="Topaz1">
    <property type="organism name" value="mouse"/>
</dbReference>
<dbReference type="PRO" id="PR:E5FYH1"/>
<dbReference type="Proteomes" id="UP000000589">
    <property type="component" value="Chromosome 9"/>
</dbReference>
<dbReference type="RNAct" id="E5FYH1">
    <property type="molecule type" value="protein"/>
</dbReference>
<dbReference type="Bgee" id="ENSMUSG00000094985">
    <property type="expression patterns" value="Expressed in spermatocyte and 13 other cell types or tissues"/>
</dbReference>
<dbReference type="GO" id="GO:0005829">
    <property type="term" value="C:cytosol"/>
    <property type="evidence" value="ECO:0007669"/>
    <property type="project" value="UniProtKB-SubCell"/>
</dbReference>
<dbReference type="GO" id="GO:0006915">
    <property type="term" value="P:apoptotic process"/>
    <property type="evidence" value="ECO:0000315"/>
    <property type="project" value="MGI"/>
</dbReference>
<dbReference type="GO" id="GO:0035234">
    <property type="term" value="P:ectopic germ cell programmed cell death"/>
    <property type="evidence" value="ECO:0000315"/>
    <property type="project" value="MGI"/>
</dbReference>
<dbReference type="GO" id="GO:0140742">
    <property type="term" value="P:lncRNA transcription"/>
    <property type="evidence" value="ECO:0000315"/>
    <property type="project" value="MGI"/>
</dbReference>
<dbReference type="GO" id="GO:0048137">
    <property type="term" value="P:spermatocyte division"/>
    <property type="evidence" value="ECO:0000315"/>
    <property type="project" value="MGI"/>
</dbReference>
<dbReference type="InterPro" id="IPR038952">
    <property type="entry name" value="TOPAZ1"/>
</dbReference>
<dbReference type="InterPro" id="IPR029435">
    <property type="entry name" value="TOPAZ1_dom"/>
</dbReference>
<dbReference type="PANTHER" id="PTHR35671">
    <property type="entry name" value="PROTEIN TOPAZ1"/>
    <property type="match status" value="1"/>
</dbReference>
<dbReference type="PANTHER" id="PTHR35671:SF1">
    <property type="entry name" value="PROTEIN TOPAZ1"/>
    <property type="match status" value="1"/>
</dbReference>
<dbReference type="Pfam" id="PF14669">
    <property type="entry name" value="Asp_Glu_race_2"/>
    <property type="match status" value="1"/>
</dbReference>
<keyword id="KW-0963">Cytoplasm</keyword>
<keyword id="KW-0221">Differentiation</keyword>
<keyword id="KW-1185">Reference proteome</keyword>
<keyword id="KW-0744">Spermatogenesis</keyword>
<comment type="function">
    <text evidence="3">Important for normal spermatogenesis and male fertility. Specifically required for progression to the post-meiotic stages of spermatocyte development. Seems to be necessary for normal expression levels of a number of testis-expressed gene transcripts, although its role in this process is unclear.</text>
</comment>
<comment type="subcellular location">
    <subcellularLocation>
        <location evidence="2">Cytoplasm</location>
        <location evidence="2">Cytosol</location>
    </subcellularLocation>
</comment>
<comment type="tissue specificity">
    <text evidence="2 3">Restricted to testis, where it localizes to germ cells.</text>
</comment>
<comment type="developmental stage">
    <text evidence="2">In both developing female and male gonads, first detected at 12.5 dpc, expression increases until 16.5 dpc and then drops (PubMed:22069478). Divergence between male and female expression starts around 5 days after birth (PubMed:22069478). In ovaries, expression decreases and becomes hardly detectable in adult ovaries, while in testis, expression increases 5 days after birth and becomes strong in the adult (PubMed:22069478). In both males and females, expression is restricted to germ cells (PubMed:22069478). In developing male germ cells, highly expressed at the spermatocyte stage; has little or no expression in round spermatids, elongated spermatids or spermatozoa (PubMed:26358182).</text>
</comment>
<comment type="disruption phenotype">
    <text evidence="3">Males are infertile, while female fertility is not affected. Testis size is significantly reduced with the phenotype apparent from postnatal day 28 (P28) onwards. Testicular histology appears to be normal before P28, but then cell aggregates begin to accumulate in the center of seminiferous tubules. Sperm development arrests at the post-meiotic round spermatid stage, associated with increased apoptosis. Adult testes completely lack round spermatids and spermatozoa. Meiosis appears to be normal up to the pachytene stage, with no apparent effect on synaptonemal complex formation or meiotic sex chromosome inactivation. However, chromosome alignment on the metaphase plate may be abnormal. In stage P20 testes, 99 gene transcripts show abnormal expression levels, including around 10 lincRNAs.</text>
</comment>
<proteinExistence type="evidence at transcript level"/>
<reference key="1">
    <citation type="journal article" date="2011" name="PLoS ONE">
        <title>TOPAZ1, a novel germ cell-specific expressed gene conserved during evolution across vertebrates.</title>
        <authorList>
            <person name="Baillet A."/>
            <person name="Le Bouffant R."/>
            <person name="Volff J.N."/>
            <person name="Luangpraseuth A."/>
            <person name="Poumerol E."/>
            <person name="Thepot D."/>
            <person name="Pailhoux E."/>
            <person name="Livera G."/>
            <person name="Cotinot C."/>
            <person name="Mandon-Pepin B."/>
        </authorList>
    </citation>
    <scope>NUCLEOTIDE SEQUENCE [MRNA]</scope>
    <scope>SUBCELLULAR LOCATION</scope>
    <scope>TISSUE SPECIFICITY</scope>
    <scope>DEVELOPMENTAL STAGE</scope>
    <source>
        <strain>C57BL/6J</strain>
        <tissue>Testis</tissue>
    </source>
</reference>
<reference key="2">
    <citation type="journal article" date="2009" name="PLoS Biol.">
        <title>Lineage-specific biology revealed by a finished genome assembly of the mouse.</title>
        <authorList>
            <person name="Church D.M."/>
            <person name="Goodstadt L."/>
            <person name="Hillier L.W."/>
            <person name="Zody M.C."/>
            <person name="Goldstein S."/>
            <person name="She X."/>
            <person name="Bult C.J."/>
            <person name="Agarwala R."/>
            <person name="Cherry J.L."/>
            <person name="DiCuccio M."/>
            <person name="Hlavina W."/>
            <person name="Kapustin Y."/>
            <person name="Meric P."/>
            <person name="Maglott D."/>
            <person name="Birtle Z."/>
            <person name="Marques A.C."/>
            <person name="Graves T."/>
            <person name="Zhou S."/>
            <person name="Teague B."/>
            <person name="Potamousis K."/>
            <person name="Churas C."/>
            <person name="Place M."/>
            <person name="Herschleb J."/>
            <person name="Runnheim R."/>
            <person name="Forrest D."/>
            <person name="Amos-Landgraf J."/>
            <person name="Schwartz D.C."/>
            <person name="Cheng Z."/>
            <person name="Lindblad-Toh K."/>
            <person name="Eichler E.E."/>
            <person name="Ponting C.P."/>
        </authorList>
    </citation>
    <scope>NUCLEOTIDE SEQUENCE [LARGE SCALE GENOMIC DNA]</scope>
    <source>
        <strain>C57BL/6J</strain>
    </source>
</reference>
<reference key="3">
    <citation type="journal article" date="2015" name="Dev. Biol.">
        <title>TOPAZ1, a germ cell specific factor, is essential for male meiotic progression.</title>
        <authorList>
            <person name="Luangpraseuth-Prosper A."/>
            <person name="Lesueur E."/>
            <person name="Jouneau L."/>
            <person name="Pailhoux E."/>
            <person name="Cotinot C."/>
            <person name="Mandon-Pepin B."/>
        </authorList>
    </citation>
    <scope>FUNCTION</scope>
    <scope>TISSUE SPECIFICITY</scope>
    <scope>DEVELOPMENTAL STAGE</scope>
    <scope>DISRUPTION PHENOTYPE</scope>
</reference>
<sequence>MRPPATPPDPTKEPGCKGTTRGLRKRGLPLTPEPGEGGGCSLEARGCEEESRQKQRMVTQASGREETEGDKLAKENGKITEAPSDDPQPGTDLVRKTSITSSESLQTVECSEFQNMAFLQSLDKEELGEGIKRRMRIKKCKSLENPPLEITKNEATQNIKVEFQDELFKNTPKHSCNSLSPGVEKNCSFELHDYSFLHSEGCNNENNFEDKPHDVCLHTEENSLKLKKENLRNLAEKDDTRTTTKLLKTEKSVIASKLLLEESHLYQNKNNGLTSCLQSEKNKYSVEENNTGRKHRKKMKSGKEEKNINLTLSNVCNNSVLVLQENQMGMEGKEAETLEPKKSFLKALRKINHNTLPPVDHLCLPKTVGKTSSRHHINAMLQKTLESSLKEDIKNTSESLGCKRIEPEKYNKSMISSTVKSPSDGHHMEKRSPRGDLRSETEESKVSCCRTIPMTGKRVWPFYSCARISAQCWKKTSLSDLNYSLLGPLENVRQHDSIIHQMNQTHLPDSKLLQPSLTERTTESSRKEMYDSDLSCLSSVSSVESTVMDIKEAMSHDKKTKLEEPSRNGAEVVSNATEDTQLSNITQSLTGNKKRKGNLSKLNLTVASQESQETNNCANKTVHRKVCITKQTLVAPDLVKILNTGRLTNFKIPLLKNKTGKRGAVSARSSEREAYSPLELLDSLSGVEAKQNRNKENICTTSGPQSLNLHSCIAPGQASSHSFYNKNSCTSSSFTKKGYDNKACNHISEPGNIISNKESISMKIENNTFSCDLGYIDQSSFCSKKQEAFVPISSEISGRKMTKSISELKLGFPDILKAYEDDVLLIDVIQDDPELFGISSEGDLSFASEVSKISQEPRVSEDQPTADFKHMHLPGKKEPGDLSKEVALLDPGLLKLESCPSLSAAKEPQHDPEGAAISLEATEETVVSGSLEGLSEQARASDSDAKCISSDKATVMEEQESTHEIFKSKDSRNVESATECQLATLGPNPLCSSALPVNLSSHQDVVSTPWINDVRFPGRHSVLQLQNPETCEIFKREKNMGVFQKPLGLLIPHRYCKLHFNTLRGCERAQCKFVHVPEQGDEKICMDVFRKYISVNEQRLLHRAAYIFLEYYRKFPPGIHFSLQVLNDLLISLLKHCLLKEVFQVVQLSIMAKMLPALKILLKIFEYVAAMKLRNAVPALIEIFCKFIEAGMVPDPEHLNYIVKLLHQAQASQQEISAVLQAKSRLRVRQLKKNWKCDLDSALSEVETCKEKSDWTKLGNLYISIKMSCEEFADLQRFCACVAETLTEDYKEERPGVPFCEFAETVSKDPQYSEVDKTLLGRIGISAVYFYHRLLLWAKGRKVLDILYELKIHFTSLKGLTGPEKEAPRCQIVNVAAEIFIKSGSLDGAIWVLRESEWIINTPLWPCDRMDVLNRHNLLCTIAHEILGKNLYKQTFEVLRNLPSFQNSQEMMGVSQSSLLFNELLDACIESNSLGISSSVAEFMVAKSIPIDFSFLRRLITSLGRSCLWLKARAHYKSALSLGCYPPLEGNLHRKLLLVPSYLSEIEMLLAMEIFLVSNASGIQSAGMGAPTQVLQIVLKRCEESKSRSKDEYQAAVERLVMAARISDPKLFIKHMTVNINKEQVYSLEHCSALKWLKENMKWAGKVWLFTNH</sequence>
<name>TOPZ1_MOUSE</name>
<protein>
    <recommendedName>
        <fullName evidence="5">Protein TOPAZ1</fullName>
    </recommendedName>
    <alternativeName>
        <fullName evidence="4">Testis- and ovary-specific PAZ domain-containing protein 1</fullName>
    </alternativeName>
</protein>
<gene>
    <name evidence="4 6" type="primary">Topaz1</name>
    <name evidence="6" type="synonym">Gm9524</name>
</gene>